<comment type="catalytic activity">
    <reaction evidence="1">
        <text>2-formamido-N(1)-(5-O-phospho-beta-D-ribosyl)acetamidine + ATP = 5-amino-1-(5-phospho-beta-D-ribosyl)imidazole + ADP + phosphate + H(+)</text>
        <dbReference type="Rhea" id="RHEA:23032"/>
        <dbReference type="ChEBI" id="CHEBI:15378"/>
        <dbReference type="ChEBI" id="CHEBI:30616"/>
        <dbReference type="ChEBI" id="CHEBI:43474"/>
        <dbReference type="ChEBI" id="CHEBI:137981"/>
        <dbReference type="ChEBI" id="CHEBI:147287"/>
        <dbReference type="ChEBI" id="CHEBI:456216"/>
        <dbReference type="EC" id="6.3.3.1"/>
    </reaction>
</comment>
<comment type="pathway">
    <text evidence="1">Purine metabolism; IMP biosynthesis via de novo pathway; 5-amino-1-(5-phospho-D-ribosyl)imidazole from N(2)-formyl-N(1)-(5-phospho-D-ribosyl)glycinamide: step 2/2.</text>
</comment>
<comment type="subcellular location">
    <subcellularLocation>
        <location evidence="1">Cytoplasm</location>
    </subcellularLocation>
</comment>
<comment type="similarity">
    <text evidence="1">Belongs to the AIR synthase family.</text>
</comment>
<accession>B8F5E6</accession>
<feature type="chain" id="PRO_1000148283" description="Phosphoribosylformylglycinamidine cyclo-ligase">
    <location>
        <begin position="1"/>
        <end position="344"/>
    </location>
</feature>
<organism>
    <name type="scientific">Glaesserella parasuis serovar 5 (strain SH0165)</name>
    <name type="common">Haemophilus parasuis</name>
    <dbReference type="NCBI Taxonomy" id="557723"/>
    <lineage>
        <taxon>Bacteria</taxon>
        <taxon>Pseudomonadati</taxon>
        <taxon>Pseudomonadota</taxon>
        <taxon>Gammaproteobacteria</taxon>
        <taxon>Pasteurellales</taxon>
        <taxon>Pasteurellaceae</taxon>
        <taxon>Glaesserella</taxon>
    </lineage>
</organism>
<name>PUR5_GLAP5</name>
<sequence length="344" mass="36921">MTVTQLSYKDAGVDIHAGNDLVERIKGDVKRTRRPEVIGGLGGFGALCALPTKYKEPILVSGTDGVGTKLRLAIDLNKHDTIGIDLVAMCVNDLVVQGAEPLFFLDYYATGKLDVDVASSVIKGIANGCEQSCCALVGGETAEMPGMYHAGDYDLAGFCVGVVEKSEIIDGSKVQVGDTLIALGSSGPHSNGYSLIRKVLEVSGTKPMDLLEGKPLSEHFLAPTKIYVKSVLELIKQAEVHAIAHLTGGGFWENIPRVLPADVKAVINEASWEWLPSFKWLQEKGNISRYEMYRTFNCGVGMVIALPEKDVETALKVLTEAGENAWVIGKIEALGSGTEQVEIL</sequence>
<protein>
    <recommendedName>
        <fullName evidence="1">Phosphoribosylformylglycinamidine cyclo-ligase</fullName>
        <ecNumber evidence="1">6.3.3.1</ecNumber>
    </recommendedName>
    <alternativeName>
        <fullName evidence="1">AIR synthase</fullName>
    </alternativeName>
    <alternativeName>
        <fullName evidence="1">AIRS</fullName>
    </alternativeName>
    <alternativeName>
        <fullName evidence="1">Phosphoribosyl-aminoimidazole synthetase</fullName>
    </alternativeName>
</protein>
<keyword id="KW-0067">ATP-binding</keyword>
<keyword id="KW-0963">Cytoplasm</keyword>
<keyword id="KW-0436">Ligase</keyword>
<keyword id="KW-0547">Nucleotide-binding</keyword>
<keyword id="KW-0658">Purine biosynthesis</keyword>
<keyword id="KW-1185">Reference proteome</keyword>
<reference key="1">
    <citation type="journal article" date="2009" name="J. Bacteriol.">
        <title>Complete genome sequence of Haemophilus parasuis SH0165.</title>
        <authorList>
            <person name="Yue M."/>
            <person name="Yang F."/>
            <person name="Yang J."/>
            <person name="Bei W."/>
            <person name="Cai X."/>
            <person name="Chen L."/>
            <person name="Dong J."/>
            <person name="Zhou R."/>
            <person name="Jin M."/>
            <person name="Jin Q."/>
            <person name="Chen H."/>
        </authorList>
    </citation>
    <scope>NUCLEOTIDE SEQUENCE [LARGE SCALE GENOMIC DNA]</scope>
    <source>
        <strain>SH0165</strain>
    </source>
</reference>
<gene>
    <name evidence="1" type="primary">purM</name>
    <name type="ordered locus">HAPS_0920</name>
</gene>
<dbReference type="EC" id="6.3.3.1" evidence="1"/>
<dbReference type="EMBL" id="CP001321">
    <property type="protein sequence ID" value="ACL32548.1"/>
    <property type="molecule type" value="Genomic_DNA"/>
</dbReference>
<dbReference type="RefSeq" id="WP_012622012.1">
    <property type="nucleotide sequence ID" value="NC_011852.1"/>
</dbReference>
<dbReference type="SMR" id="B8F5E6"/>
<dbReference type="STRING" id="557723.HAPS_0920"/>
<dbReference type="KEGG" id="hap:HAPS_0920"/>
<dbReference type="PATRIC" id="fig|557723.8.peg.918"/>
<dbReference type="HOGENOM" id="CLU_047116_0_0_6"/>
<dbReference type="UniPathway" id="UPA00074">
    <property type="reaction ID" value="UER00129"/>
</dbReference>
<dbReference type="Proteomes" id="UP000006743">
    <property type="component" value="Chromosome"/>
</dbReference>
<dbReference type="GO" id="GO:0005829">
    <property type="term" value="C:cytosol"/>
    <property type="evidence" value="ECO:0007669"/>
    <property type="project" value="TreeGrafter"/>
</dbReference>
<dbReference type="GO" id="GO:0005524">
    <property type="term" value="F:ATP binding"/>
    <property type="evidence" value="ECO:0007669"/>
    <property type="project" value="UniProtKB-KW"/>
</dbReference>
<dbReference type="GO" id="GO:0004637">
    <property type="term" value="F:phosphoribosylamine-glycine ligase activity"/>
    <property type="evidence" value="ECO:0007669"/>
    <property type="project" value="TreeGrafter"/>
</dbReference>
<dbReference type="GO" id="GO:0004641">
    <property type="term" value="F:phosphoribosylformylglycinamidine cyclo-ligase activity"/>
    <property type="evidence" value="ECO:0007669"/>
    <property type="project" value="UniProtKB-UniRule"/>
</dbReference>
<dbReference type="GO" id="GO:0006189">
    <property type="term" value="P:'de novo' IMP biosynthetic process"/>
    <property type="evidence" value="ECO:0007669"/>
    <property type="project" value="UniProtKB-UniRule"/>
</dbReference>
<dbReference type="GO" id="GO:0046084">
    <property type="term" value="P:adenine biosynthetic process"/>
    <property type="evidence" value="ECO:0007669"/>
    <property type="project" value="TreeGrafter"/>
</dbReference>
<dbReference type="CDD" id="cd02196">
    <property type="entry name" value="PurM"/>
    <property type="match status" value="1"/>
</dbReference>
<dbReference type="FunFam" id="3.30.1330.10:FF:000001">
    <property type="entry name" value="Phosphoribosylformylglycinamidine cyclo-ligase"/>
    <property type="match status" value="1"/>
</dbReference>
<dbReference type="FunFam" id="3.90.650.10:FF:000001">
    <property type="entry name" value="Phosphoribosylformylglycinamidine cyclo-ligase"/>
    <property type="match status" value="1"/>
</dbReference>
<dbReference type="Gene3D" id="3.90.650.10">
    <property type="entry name" value="PurM-like C-terminal domain"/>
    <property type="match status" value="1"/>
</dbReference>
<dbReference type="Gene3D" id="3.30.1330.10">
    <property type="entry name" value="PurM-like, N-terminal domain"/>
    <property type="match status" value="1"/>
</dbReference>
<dbReference type="HAMAP" id="MF_00741">
    <property type="entry name" value="AIRS"/>
    <property type="match status" value="1"/>
</dbReference>
<dbReference type="InterPro" id="IPR010918">
    <property type="entry name" value="PurM-like_C_dom"/>
</dbReference>
<dbReference type="InterPro" id="IPR036676">
    <property type="entry name" value="PurM-like_C_sf"/>
</dbReference>
<dbReference type="InterPro" id="IPR016188">
    <property type="entry name" value="PurM-like_N"/>
</dbReference>
<dbReference type="InterPro" id="IPR036921">
    <property type="entry name" value="PurM-like_N_sf"/>
</dbReference>
<dbReference type="InterPro" id="IPR004733">
    <property type="entry name" value="PurM_cligase"/>
</dbReference>
<dbReference type="NCBIfam" id="TIGR00878">
    <property type="entry name" value="purM"/>
    <property type="match status" value="1"/>
</dbReference>
<dbReference type="PANTHER" id="PTHR10520:SF12">
    <property type="entry name" value="TRIFUNCTIONAL PURINE BIOSYNTHETIC PROTEIN ADENOSINE-3"/>
    <property type="match status" value="1"/>
</dbReference>
<dbReference type="PANTHER" id="PTHR10520">
    <property type="entry name" value="TRIFUNCTIONAL PURINE BIOSYNTHETIC PROTEIN ADENOSINE-3-RELATED"/>
    <property type="match status" value="1"/>
</dbReference>
<dbReference type="Pfam" id="PF00586">
    <property type="entry name" value="AIRS"/>
    <property type="match status" value="1"/>
</dbReference>
<dbReference type="Pfam" id="PF02769">
    <property type="entry name" value="AIRS_C"/>
    <property type="match status" value="1"/>
</dbReference>
<dbReference type="SUPFAM" id="SSF56042">
    <property type="entry name" value="PurM C-terminal domain-like"/>
    <property type="match status" value="1"/>
</dbReference>
<dbReference type="SUPFAM" id="SSF55326">
    <property type="entry name" value="PurM N-terminal domain-like"/>
    <property type="match status" value="1"/>
</dbReference>
<evidence type="ECO:0000255" key="1">
    <source>
        <dbReference type="HAMAP-Rule" id="MF_00741"/>
    </source>
</evidence>
<proteinExistence type="inferred from homology"/>